<reference key="1">
    <citation type="submission" date="2007-08" db="EMBL/GenBank/DDBJ databases">
        <authorList>
            <consortium name="The Vibrio harveyi Genome Sequencing Project"/>
            <person name="Bassler B."/>
            <person name="Clifton S.W."/>
            <person name="Fulton L."/>
            <person name="Delehaunty K."/>
            <person name="Fronick C."/>
            <person name="Harrison M."/>
            <person name="Markivic C."/>
            <person name="Fulton R."/>
            <person name="Tin-Wollam A.-M."/>
            <person name="Shah N."/>
            <person name="Pepin K."/>
            <person name="Nash W."/>
            <person name="Thiruvilangam P."/>
            <person name="Bhonagiri V."/>
            <person name="Waters C."/>
            <person name="Tu K.C."/>
            <person name="Irgon J."/>
            <person name="Wilson R.K."/>
        </authorList>
    </citation>
    <scope>NUCLEOTIDE SEQUENCE [LARGE SCALE GENOMIC DNA]</scope>
    <source>
        <strain>ATCC BAA-1116 / BB120</strain>
    </source>
</reference>
<dbReference type="EMBL" id="CP000789">
    <property type="protein sequence ID" value="ABU70507.1"/>
    <property type="molecule type" value="Genomic_DNA"/>
</dbReference>
<dbReference type="RefSeq" id="WP_005378451.1">
    <property type="nucleotide sequence ID" value="NC_022269.1"/>
</dbReference>
<dbReference type="SMR" id="A7MV11"/>
<dbReference type="KEGG" id="vha:VIBHAR_01537"/>
<dbReference type="PATRIC" id="fig|338187.25.peg.1124"/>
<dbReference type="Proteomes" id="UP000008152">
    <property type="component" value="Chromosome I"/>
</dbReference>
<dbReference type="GO" id="GO:0005829">
    <property type="term" value="C:cytosol"/>
    <property type="evidence" value="ECO:0007669"/>
    <property type="project" value="TreeGrafter"/>
</dbReference>
<dbReference type="FunFam" id="2.20.25.10:FF:000002">
    <property type="entry name" value="UPF0434 protein YcaR"/>
    <property type="match status" value="1"/>
</dbReference>
<dbReference type="Gene3D" id="2.20.25.10">
    <property type="match status" value="1"/>
</dbReference>
<dbReference type="HAMAP" id="MF_01187">
    <property type="entry name" value="UPF0434"/>
    <property type="match status" value="1"/>
</dbReference>
<dbReference type="InterPro" id="IPR005651">
    <property type="entry name" value="Trm112-like"/>
</dbReference>
<dbReference type="PANTHER" id="PTHR33505:SF4">
    <property type="entry name" value="PROTEIN PREY, MITOCHONDRIAL"/>
    <property type="match status" value="1"/>
</dbReference>
<dbReference type="PANTHER" id="PTHR33505">
    <property type="entry name" value="ZGC:162634"/>
    <property type="match status" value="1"/>
</dbReference>
<dbReference type="Pfam" id="PF03966">
    <property type="entry name" value="Trm112p"/>
    <property type="match status" value="1"/>
</dbReference>
<dbReference type="SUPFAM" id="SSF158997">
    <property type="entry name" value="Trm112p-like"/>
    <property type="match status" value="1"/>
</dbReference>
<proteinExistence type="inferred from homology"/>
<accession>A7MV11</accession>
<feature type="chain" id="PRO_1000065859" description="UPF0434 protein VIBHAR_01537">
    <location>
        <begin position="1"/>
        <end position="59"/>
    </location>
</feature>
<name>Y1537_VIBC1</name>
<gene>
    <name type="ordered locus">VIBHAR_01537</name>
</gene>
<organism>
    <name type="scientific">Vibrio campbellii (strain ATCC BAA-1116)</name>
    <dbReference type="NCBI Taxonomy" id="2902295"/>
    <lineage>
        <taxon>Bacteria</taxon>
        <taxon>Pseudomonadati</taxon>
        <taxon>Pseudomonadota</taxon>
        <taxon>Gammaproteobacteria</taxon>
        <taxon>Vibrionales</taxon>
        <taxon>Vibrionaceae</taxon>
        <taxon>Vibrio</taxon>
    </lineage>
</organism>
<comment type="similarity">
    <text evidence="1">Belongs to the UPF0434 family.</text>
</comment>
<protein>
    <recommendedName>
        <fullName evidence="1">UPF0434 protein VIBHAR_01537</fullName>
    </recommendedName>
</protein>
<sequence length="59" mass="6760">MDHRLLEIVACPVCKGKLTYDKDNQELICKLDRLAYPIKEGIPVLLEPEARTMSMDEGR</sequence>
<evidence type="ECO:0000255" key="1">
    <source>
        <dbReference type="HAMAP-Rule" id="MF_01187"/>
    </source>
</evidence>